<dbReference type="EC" id="3.4.23.36" evidence="1"/>
<dbReference type="EMBL" id="CP000462">
    <property type="protein sequence ID" value="ABK37254.1"/>
    <property type="molecule type" value="Genomic_DNA"/>
</dbReference>
<dbReference type="RefSeq" id="WP_011704644.1">
    <property type="nucleotide sequence ID" value="NC_008570.1"/>
</dbReference>
<dbReference type="RefSeq" id="YP_855225.1">
    <property type="nucleotide sequence ID" value="NC_008570.1"/>
</dbReference>
<dbReference type="SMR" id="A0KG40"/>
<dbReference type="STRING" id="380703.AHA_0683"/>
<dbReference type="EnsemblBacteria" id="ABK37254">
    <property type="protein sequence ID" value="ABK37254"/>
    <property type="gene ID" value="AHA_0683"/>
</dbReference>
<dbReference type="GeneID" id="4487675"/>
<dbReference type="KEGG" id="aha:AHA_0683"/>
<dbReference type="PATRIC" id="fig|380703.7.peg.685"/>
<dbReference type="eggNOG" id="COG0597">
    <property type="taxonomic scope" value="Bacteria"/>
</dbReference>
<dbReference type="HOGENOM" id="CLU_083252_4_0_6"/>
<dbReference type="OrthoDB" id="9810259at2"/>
<dbReference type="UniPathway" id="UPA00665"/>
<dbReference type="Proteomes" id="UP000000756">
    <property type="component" value="Chromosome"/>
</dbReference>
<dbReference type="GO" id="GO:0005886">
    <property type="term" value="C:plasma membrane"/>
    <property type="evidence" value="ECO:0007669"/>
    <property type="project" value="UniProtKB-SubCell"/>
</dbReference>
<dbReference type="GO" id="GO:0004190">
    <property type="term" value="F:aspartic-type endopeptidase activity"/>
    <property type="evidence" value="ECO:0007669"/>
    <property type="project" value="UniProtKB-UniRule"/>
</dbReference>
<dbReference type="GO" id="GO:0006508">
    <property type="term" value="P:proteolysis"/>
    <property type="evidence" value="ECO:0007669"/>
    <property type="project" value="UniProtKB-KW"/>
</dbReference>
<dbReference type="HAMAP" id="MF_00161">
    <property type="entry name" value="LspA"/>
    <property type="match status" value="1"/>
</dbReference>
<dbReference type="InterPro" id="IPR001872">
    <property type="entry name" value="Peptidase_A8"/>
</dbReference>
<dbReference type="NCBIfam" id="TIGR00077">
    <property type="entry name" value="lspA"/>
    <property type="match status" value="1"/>
</dbReference>
<dbReference type="PANTHER" id="PTHR33695">
    <property type="entry name" value="LIPOPROTEIN SIGNAL PEPTIDASE"/>
    <property type="match status" value="1"/>
</dbReference>
<dbReference type="PANTHER" id="PTHR33695:SF1">
    <property type="entry name" value="LIPOPROTEIN SIGNAL PEPTIDASE"/>
    <property type="match status" value="1"/>
</dbReference>
<dbReference type="Pfam" id="PF01252">
    <property type="entry name" value="Peptidase_A8"/>
    <property type="match status" value="1"/>
</dbReference>
<dbReference type="PRINTS" id="PR00781">
    <property type="entry name" value="LIPOSIGPTASE"/>
</dbReference>
<dbReference type="PROSITE" id="PS00855">
    <property type="entry name" value="SPASE_II"/>
    <property type="match status" value="1"/>
</dbReference>
<evidence type="ECO:0000255" key="1">
    <source>
        <dbReference type="HAMAP-Rule" id="MF_00161"/>
    </source>
</evidence>
<protein>
    <recommendedName>
        <fullName evidence="1">Lipoprotein signal peptidase</fullName>
        <ecNumber evidence="1">3.4.23.36</ecNumber>
    </recommendedName>
    <alternativeName>
        <fullName evidence="1">Prolipoprotein signal peptidase</fullName>
    </alternativeName>
    <alternativeName>
        <fullName evidence="1">Signal peptidase II</fullName>
        <shortName evidence="1">SPase II</shortName>
    </alternativeName>
</protein>
<keyword id="KW-0064">Aspartyl protease</keyword>
<keyword id="KW-0997">Cell inner membrane</keyword>
<keyword id="KW-1003">Cell membrane</keyword>
<keyword id="KW-0378">Hydrolase</keyword>
<keyword id="KW-0472">Membrane</keyword>
<keyword id="KW-0645">Protease</keyword>
<keyword id="KW-1185">Reference proteome</keyword>
<keyword id="KW-0812">Transmembrane</keyword>
<keyword id="KW-1133">Transmembrane helix</keyword>
<gene>
    <name evidence="1" type="primary">lspA</name>
    <name type="ordered locus">AHA_0683</name>
</gene>
<feature type="chain" id="PRO_1000038776" description="Lipoprotein signal peptidase">
    <location>
        <begin position="1"/>
        <end position="167"/>
    </location>
</feature>
<feature type="transmembrane region" description="Helical" evidence="1">
    <location>
        <begin position="12"/>
        <end position="32"/>
    </location>
</feature>
<feature type="transmembrane region" description="Helical" evidence="1">
    <location>
        <begin position="68"/>
        <end position="88"/>
    </location>
</feature>
<feature type="transmembrane region" description="Helical" evidence="1">
    <location>
        <begin position="99"/>
        <end position="119"/>
    </location>
</feature>
<feature type="transmembrane region" description="Helical" evidence="1">
    <location>
        <begin position="137"/>
        <end position="157"/>
    </location>
</feature>
<feature type="active site" evidence="1">
    <location>
        <position position="124"/>
    </location>
</feature>
<feature type="active site" evidence="1">
    <location>
        <position position="142"/>
    </location>
</feature>
<comment type="function">
    <text evidence="1">This protein specifically catalyzes the removal of signal peptides from prolipoproteins.</text>
</comment>
<comment type="catalytic activity">
    <reaction evidence="1">
        <text>Release of signal peptides from bacterial membrane prolipoproteins. Hydrolyzes -Xaa-Yaa-Zaa-|-(S,diacylglyceryl)Cys-, in which Xaa is hydrophobic (preferably Leu), and Yaa (Ala or Ser) and Zaa (Gly or Ala) have small, neutral side chains.</text>
        <dbReference type="EC" id="3.4.23.36"/>
    </reaction>
</comment>
<comment type="pathway">
    <text evidence="1">Protein modification; lipoprotein biosynthesis (signal peptide cleavage).</text>
</comment>
<comment type="subcellular location">
    <subcellularLocation>
        <location evidence="1">Cell inner membrane</location>
        <topology evidence="1">Multi-pass membrane protein</topology>
    </subcellularLocation>
</comment>
<comment type="similarity">
    <text evidence="1">Belongs to the peptidase A8 family.</text>
</comment>
<proteinExistence type="inferred from homology"/>
<sequence length="167" mass="18917">MNMTHHKSGLRWLWLAVLAFVLDQASKLAVVKLLPFGYPGVEITPFFNLVHVYNKGAAFSFLADQGGWQRWFFAVLAFAICGLLIHWLRKQSVAQRWSGIAYSLIIGGALGNVFDRLVLGHVVDFLDFYWQRAHWPAFNLADSFIFIGAAMIVLDGFRSEKKKDVTP</sequence>
<name>LSPA_AERHH</name>
<accession>A0KG40</accession>
<organism>
    <name type="scientific">Aeromonas hydrophila subsp. hydrophila (strain ATCC 7966 / DSM 30187 / BCRC 13018 / CCUG 14551 / JCM 1027 / KCTC 2358 / NCIMB 9240 / NCTC 8049)</name>
    <dbReference type="NCBI Taxonomy" id="380703"/>
    <lineage>
        <taxon>Bacteria</taxon>
        <taxon>Pseudomonadati</taxon>
        <taxon>Pseudomonadota</taxon>
        <taxon>Gammaproteobacteria</taxon>
        <taxon>Aeromonadales</taxon>
        <taxon>Aeromonadaceae</taxon>
        <taxon>Aeromonas</taxon>
    </lineage>
</organism>
<reference key="1">
    <citation type="journal article" date="2006" name="J. Bacteriol.">
        <title>Genome sequence of Aeromonas hydrophila ATCC 7966T: jack of all trades.</title>
        <authorList>
            <person name="Seshadri R."/>
            <person name="Joseph S.W."/>
            <person name="Chopra A.K."/>
            <person name="Sha J."/>
            <person name="Shaw J."/>
            <person name="Graf J."/>
            <person name="Haft D.H."/>
            <person name="Wu M."/>
            <person name="Ren Q."/>
            <person name="Rosovitz M.J."/>
            <person name="Madupu R."/>
            <person name="Tallon L."/>
            <person name="Kim M."/>
            <person name="Jin S."/>
            <person name="Vuong H."/>
            <person name="Stine O.C."/>
            <person name="Ali A."/>
            <person name="Horneman A.J."/>
            <person name="Heidelberg J.F."/>
        </authorList>
    </citation>
    <scope>NUCLEOTIDE SEQUENCE [LARGE SCALE GENOMIC DNA]</scope>
    <source>
        <strain>ATCC 7966 / DSM 30187 / BCRC 13018 / CCUG 14551 / JCM 1027 / KCTC 2358 / NCIMB 9240 / NCTC 8049</strain>
    </source>
</reference>